<sequence length="10421" mass="1122579">MNYRDKIQKFSIRKYTVGTFSTVIATLVFLGFNTSQAHAAETNQPASVVKQKQQSNNEQTENRESQVQNSQNSQNGQSLSATHENEQPNISQANLVDQKVAQSSTTNDEQPASQNVNTKKDSATAATTQPDKEQSKHKQNESQSANKNGNDNRAAHVENHEANVVTASDSSDNGNVQHDRNELQAFFDANYHDYRFIDRENADSGTFNYVKGIFDKINTLLGSNDPINNKDLQLAYKELEQAVALIRTMPQRQQTSRRSNRIQTRSVESRAAEPRSVSDYQNANSSYYVENANDGSGYPVGTYINASSKGAPYNLPTTPWNTLKASDSKEIALMTAKQTGDGYQWVIKFNKGHAPHQNMIFWFALPADQVPVGRTDFVTVNSDGTNVQWSHGAGAGANKPLQQMWEYGVNDPHRSHDFKIRNRSGQVIYDWPTVHIYSLEDLSRASDYFSEAGATPATKAFGRQNFEYINGQKPAESPGVPKVYTFIGQGDASYTISFKTQGPTVNKLYYAAGGRALEYNQLFMYSQLYVESTQDHQQRLNGLRQVVNRTYRIGTTKRVEVSQGNVQTKKVLESTNLNIDDFVDDPLSYVKTPSNKVLGFYSNNANTNAFRPGGAQQLNEYQLSQLFTDQKLQEAARTRNPIRLMIGFDYPDAYGNSETLVPVNLTVLPEIQHNIKFFKNDDTQNIAEKPFSKQAGHPVFYVYAGNQGNASVNLGGSVTSIQPLRINLTSNENFTDKDWQITGIPRTLHIENSTNRPNNARERNIELVGNLLPGDYFGTIRFGRKEQLFEIRVKPHTPTITTTAEQLRGTALQKVPVNISGIPLDPSALVYLVAPTNQTTNGGSEADQIPSGYTILATGTPDGVHNTITIRPQDYVVFIPPVGKQIRAVVYYNKVVASNMSNAVTILPDDIPPTINNPVGINAKYYRGDEVNFTMGVSDRHSGIKNTTITTLPNGWTSNLTKADKNNGSLSITGRVSMNQAFNSDITFKVSATDNVNNTTNDSQSKHVSIHVGKISEDAHPIVLGNTEKVVVVNPTAVSNDEKQSIITAFMNKNQNIRGYLASTDPVTVDNNGNVTLHYRDGSSTTLDATNVMTYEPVVKPEYQTVNAAKTATVTIAKGQSFSIGDIKQYFTLSNGQPIPSGTFTNITSDRTIPTAQEVSQMNAGTQLYHITATNAYHKDSEDFYISLKIIDVKQPEGDQRVYRTSTYDLTTDEISKVKQAFINANRDVITLAEGDISVTNTPNGANVSTITVNINKGRLTKSFASNLANMNFLRWVNFPQDYTVTWTNAKIANRPTDGGLSWSDDHKSLIYRYDATLGTQITTNDILTMLKATTTVPGLRNNITGNEKSQAEAGGRPNFRTTGYSQSNATTDGQRQFTLNGQVIQVLDIINPSNGYGGQPVTNSNTRANHSNSTVVNVNEPAANGAGAFTIDHVVKSNSTHNASDAVYKAQLYLTPYGPKQYVEHLNQNTGNTTDAINIYFVPSDLVNPTISVGNYTNHQVFSGETFTNTITANDNFGVQSVTVPNTSQITGTVDNNHQHVSATAPNVTSATNKTINLLATDTSGNTATTSFNVTVKPLRDKYRVGTSSTAANPVRIANISNNATVSQADQTTIINSLTFTETVPNRSYARASANEITSKTVSNVSRTGNNANVTVTVTYQDGTTSTVTVPVKHVIPEIVAHSHYTVQGQDFPAGNGSSASDYFKLSNGSDIADATITWVSGQAPNKDNTRIGEDITVTAHILIDGETTPITKTATYKVVRTVPKHVFETARGVLYPGVSDMYDAKQYVKPVNNSWSTNAQHMNFQFVGTYGPNKDVVGISTRLIRVTYDNRQTEDLTILSKVKPDPPRIDANSVTYKAGLTNQEIKVNNVLNNSSVKLFKADNTPLNVTNITHGSGFSSVVTVSDALPNGGIKAKSSISMNNVTYTTQDEHGQVVTVTRNESVDSNDSATVTVTPQLQATTEGAVFIKGGDGFDFGHVERFIQNPPHGATVAWHDSPDTWKNTVGNTHKTAVVTLPNGQGTRNVEVPVKVYPVANAKAPSRDVKGQNLTNGTDAMNYITFDPNTNTNGITAAWANRQQPNNQQAGVQHLNVDVTYPGISAAKRVPVTVNVYQFEFPQTTYTTTVGGTLASGTQASGYAHMQNATGLPTDGFTYKWNRDTTGTNDANWSAMNKPNVAKVVNAKYDVIYNGHTFATSLPAKFVVKDVQPAKPTVTETAAGAITIAPGANQTVNTHAGNVTTYADKLVIKRNGNVVTTFTRRNNTSPWVKEASAATVAGIAGTNNGITVAAGTFNPADTIQVVATQGSGETVSDEQRSDDFTVVAPQPNQATTKIWQNGHIDITPNNPSGHLINPTQAMDIAYTEKVGNGAEHSKTINVVRGQNNQWTIANKPDYVTLDAQTGKVTFNANTIKPNSSITITPKAGTGHSVSSNPSTLTAPAAHTVNTTEIVKDYGSNVTAAEINNAVQVANKRTATIKNGTAMPTNLAGGSTTTIPVTVTYNDGSTEEVQESIFTKADKRELITAKNHLDDPVSTEGKKPGTITQYNNAMHNAQQQINTAKTEAQQVINNERATPQQVSDALTKVRAAQTKIDQAKALLQNKEDNSQLVTSKNNLQSSVNQVPSTAGMTQQSIDNYNAKKREAETEITAAQRVIDNGDATAQQISDEKHRVDNALTALNQAKHDLTADTHALEQAVQQLNRTGTTTGKKPASITAYNNSIRALQSDLTSAKNSANAIIQKPIRTVQEVQSALTNVNRVNERLTQAINQLVPLADNSALKTAKTKLDEEINKSVTTDGMTQSSIQAYENAKRAGQTESTNAQNVINNGDATDQQIAAEKTKVEEKYNSLKQAIAGLTPDLAPLQTAKTQLQNDIDQPTSTTGMTSASIAAFNEKLSAARTKIQEIDRVLASHPDVATIRQNVTAANAAKSALDQARNGLTVDKAPLENAKNQLQHSIDTQTSTTGMTQDSINAYNAKLTAARNKIQQINQVLAGSPTVEQINTNTSTANQAKSDLDHARQALTPDKAPLQTAKTQLEQSINQPTDTTGMTTASLNAYNQKLQAARQKLTEINQVLNGNPTVQNINDKVTEANQAKDQLNTARQGLTLDRQPALTTLHGASNLNQAQQNNFTQQINAAQNHAALETIKSNITALNTAMTKLKDSVADNNTIKSDQNYTDATPANKQAYDNAVNAAKGVIGETTNPTMDVNTVNQKAASVKSTKDALDGQQNLQRAKTEATNAITHASDLNQAQKNALTQQVNSAQNVQAVNDIKQTTQSLNTAMTGLKRGVANHNQVVQSDNYVNADTNKKNDYNNAYNHANDIINGNAQHPVITPSDVNNALSNVTSKEHALNGEAKLNAAKQEANTALGHLNNLNNAQRQNLQSQINGAHQIDAVNTIKQNATNLNSAMGNLRQAVADKDQVKRTEDYADADTAKQNAYNSAVSSAETIINQTTNPTMSVDDVNRATSAVTSNKNALNGYEKLAQSKTDAARAIDALPHLNNAQKADVKSKINAASNIAGVNTVKQQGTDLNTAMGNLQGAINDEQTTLNSQNYQDATPSKKTAYTNAVQAAKDILNKSNGQNKTKDQVTEAMNQVNSAKNNLDGTRLLDQAKQTAKQQLNNMTHLTTAQKTNLTNQINSGTTVAGVQTVQSNANTLDQAMNTLRQSIANKDATKASEDYVDANNDKQTAYNNAVAAAETIINANSNPEMNPSTITQKAEQVNSSKTALNGDENLAAAKQNAKTYLNTLTSITDAQKNNLISQITSATRVSGVDTVKQNAQHLDQAMASLQNGINNESQVKSSEKYRDADTNKQQEYDNAITAAKAILNKSTGPNTAQNAVEAALQRVNNAKDALNGDAKLIAAQNAAKQHLGTLTHITTAQRNDLTNQISQATNLAGVESVKQNANSLDGAMGNLQTAINDKSGTLASQNFLDADEQKRNAYNQAVSAAETILNKQTGPNTAKTAVEQALNNVNNAKHALNGTQNLNNAKQAAITAINGASDLNQKQKDALKAQANGAQRVSNAQDVQHNATELNTAMGTLKHAIADKTNTLASSKYVNADSTKQNAYTTKVTNAEHIISGTPTVVTTPSEVTAAANQVNSAKQELNGDERLREAKQNANTAIDALTQLNTPQKAKLKEQVGQANRLEDVQTVQTNGQALNNAMKGLRDSIANETTVKTSQNYTDASPNNQSTYNSAVSNAKGIINQTNNPTMDTSAITQATTQVNNAKNGLNGAENLRNAQNTAKQNLNTLSHLTNNQKSAISSQIDRAGHVSEVTATKNAATELNTQMGNLEQAIHDQNTVKQSVKFTDADKAKRDAYTNAVSRAEAILNKTQGANTSKQDVEAAIQNVSSAKNALNGDQNVTNAKNAAKNALNNLTSINNAQKRDLTTKIDQATTVAGVEAVSNTSTQLNTAMANLQNGINDKTNTLASENYHDADSDKKTAYTQAVTNAENILNKNSGSNLDKTAVENALSQVANAKGALNGNHNLEQAKSNANTTINGLQHLTTAQKDKLKQQVQQAQNVAGVDTVKSSANTLNGAMGTLRNSIQDNTATKNGQNYLDATERNKTNYNNAVDSANGVINATSNPNMDANAINQIATQVTSTKNALDGTHNLTQAKQTATNAIDGATNLNKAQKDALKAQVTSAQRVANVTSIQQTANELNTAMGQLQHGIDDENATKQTQKYRDAEQSKKTAYDQAVAAAKAILNKQTGSNSDKAAVDRALQQVTSTKDALNGDAKLAEAKAAAKQNLGTLNHITNAQRTDLEGQINQATTVDGVNTVKTNANTLDGAMNSLQGSINDKDATLRNQNYLDADESKRNAYTQAVTAAEGILNKQTGGNTSKADVDNALNAVTRAKAALNGADNLRNAKTSATNTIDGLPNLTQLQKDNLKHQVEQAQNVAGVNGVKDKGNTLNTAMGALRTSIQNDNTTKTSQNYLDASDSNKNNYNTAVNNANGVINATNNPNMDANAINGMANQVNTTKAALNGAQNLAQAKTNATNTINNAHDLNQKQKDALKTQVNNAQRVSDANNVQHTATELNSAMTALKAAIADKERTKASGNYVNADQEKRQAYDSKVTNAENIISGTPNATLTVNDVNSAASQVNAAKTALNGDNNLRVAKEHANNTIDGLAQLNNAQKAKLKEQVQSATTLDGVQTVKNSSQTLNTAMKGLRDSIANEATIKAGQNYTDASPNNRNEYDSAVTAAKAIINQTSNPTMEPNTITQVTSQVTTKEQALNGARNLAQAKTTAKNNLNNLTSINNAQKDALTRSIDGATTVAGVNQETAKATELNNAMHSLQNGINDETQTKQTQKYLDAEPSKKSAYDQAVNAAKAILTKASGQNVDKAAVEQALQNVNSTKTALNGDAKLNEAKAAAKQTLGTLTHINNAQRTALDNEITQATNVEGVNTVKAKAQQLDGAMGQLETSIRDKDTTLQSQNYQDADDAKRTAYSQAVNAAATILNKTAGGNTPKADVERAMQAVTQANTALNGIQNLDRAKQAANTAITNASDLNTKQKEALKAQVTSAGRVSAANGVEHTATELNTAMTALKRAIADKAETKASGNYVNADANKRQAYDEKVTAAENIVSGTPTPTLTPADVTNAATQVTNAKTQLNGNHNLEVAKQNANTAIDGLTSLNGPQKAKLKEQVGQATTLPNVQTVRDNAQTLNTAMKGLRDSIANEATIKAGQNYTDASQNKQTDYNSAVTAAKAIIGQTTSPSMNAQEINQAKDQVTAKQQALNGQENLRTAQTNAKQHLNGLSDLTDAQKDAVKRQIEGATHVNEVTQAQNNADALNTAMTNLKNGIQDQNTIKQGVNFTDADEAKRNAYTNAVTQAEQILNKAQGPNTSKDGVETALENVQRAKNELNGNQNVANAKTTAKNALNNLTSINNAQKEALKSQIEGATTVAGVNQVSTTASELNTAMSNLQNGINDEAATKAAQKYTDADREKQTAYNDAVTAAKTLLDKTAGSNDNKAAVEQALQRVNTAKTALNGDERLNEAKNTAKQQVATMSHLTDAQKANLTSQIESGTTVAGVQGIQANAGTLDQAMNQLRQSIASKDATKSSEDYQDANADLQNAYNDAVTNAEGIISATNNPEMNPDTINQKASQVNSAKSALNGDEKLAAAKQTAKSDIGRLTDLNNAQRTAANAEVDQAPNLAAVTAAKNKATSLNTAMGNLKHALAEKDNTKRSVNYTDADQPKQQAYDTAVTQAEAITNANGSNANETQVQAALNQLNQAKNDLNGDNKVAQAKESAKRALASYSNLNNAQSTAAISQIDNATTVAGVTAAQNTANELNTAMGQLQNGINDQNTVKQQVNFTDADQGKKDAYTNAVTNAQGILDKAHGQNMTKAQVEAALNQVTTAKNALNGDANVRQAKSDAKANLGTLTHLNNAQKQDLTSQIEGATTVNGVNGVKTKAQDLDGAMQRLQSAIANKDQTKASENYIDADPTKKTAFDNAITQAESYLNKDHGANKDKQAVEQAIQSVTSTENALNGDANLQRAKTEAIQAIDNLTHLNTPQKTALKQQVNAAQRVSGVTDLKNSATSLNNAMDQLKQAIADHDTIVASGNYTNASPDKQGAYTDAYNAAKNIVNGSPNVITNAADVTAATQRVNNAETGLNGDTNLATAKQQAKDALRQMTHLSDAQKQSITGQIDSATQVTGVQSVKDNATNLDNAMNQLRNSIANKDDVKASQPYVDADRDKQNAYNTAVTNAENIINATSQPTLDPSAVTQAANQVSTNKTALNGAQNLANKKQETTANINQLSHLNNAQKQDLNTQVTNAPNISTVNQVKTKAEQLDQAMERLINGIQDKDQVKQSVNFTDADPEKQTAYNNAVTAAENIINQANGTNANQSQVEAALSTVTTTKQALNGDRKVTDAKNNANQTLSTLDNLNNAQKGAVTGNINQAHTVAEVTQAIQTAQELNTAMGNLKNSLNDKDTTLGSQNFADADPEKKNAYNEAVHNAENILNKSTGTNVPKDQVEAAMNQVNATKAALNGTQNLEKAKQHANTAIDGLSHLTNAQKEALKQLVQQSTTVAEAQGNEQKANNVDAAMDKLRQSIADNATTKQNQNYTDASQNKKDAYNNAVTTAQGIIDQTTSPTLDPTVINQAAGQVSTTKNALNGNENLEAAKQQASQSLGSLDNLNNAQKQTVTDQINGAHTVDEANQIKQNAQNLNTAMGNLKQAIADKDATKATVNFTDADQAKQQAYNTAVTNAENIISKANGGNATQAEVEQAIKQVNAAKQALNGNANVQHAKDEATALINSSNDLNQAQKDALKQQVQNATTVAGVNNVKQTAQELNNAMTQLKQGIADKEQTKADGNFVNADPDKQNAYNQAVAKAEALISATPDVVVTPSEITAALNKVTQAKNDLNGNTNLATAKQNVQHAIDQLPNLNQAQRDEYSKQITQATLVPNVNAIQQAATTLNDAMTQLKQGIANKAQIKGSENYHDADTDKQTAYDNAVTKAEELLKQTTNPTMDPNTIQQALTKVNDTNQALNGNQKLADAKQDAKTTLGTLDHLNDAQKQALTTQVEQAPDIATVNNVKQNAQNLNNAMTNLNNALQDKTETLNSINFTDADQAKKDAYTNAVSHAEGILSKANGSNASQTEVEQAMQRVNEAKQALNGNDNVQRAKDAAKQVITNANDLNQAQKDALKQQVDAAQTVANVNTIKQTAQDLNQAMTQLKQGIADKDQTKANGNFVNADTDKQNAYNNAVAHAEQIISGTPNANVDPQQVAQALQQVNQAKGDLNGNHNLQVAKDNANTAIDQLPNLNQPQKTALKDQVSHAELVTGVNAIKQNADALNNAMGTLKQQIQANSQVPQSVDFTQADQDKQQAYNNAANQAQQIANGIPTPVLTPDTVTQAVTTMNQAKDALNGDEKLAQAKQEALANLDTLRDLNQPQRDALRNQINQAQALATVEQTKQNAQNVNTAMSNLKQGIANKDTVKASENYHDADADKQTAYTNAVSQAEGIINQTTNPTLNPDEITRALTQVTDAKNGLNGEAKLATEKQNAKDAVSGMTHLNDAQKQALKGQIDQSPEIATVNQVKQTATSLDQAMDQLSQAINDKAQTLADGNYLNADPDKQNAYKQAVAKAEALLNKQSGTNEVQAQVESITNEVNAAKQALNGNDNLANAKQQAKQQLANLTHLNDAQKQSFESQITQAPLVTDVTTINQKAQTLDHAMELLRNSVADNQTTLASEDYHDATAQRQNDYNQAVTAANNIINQTTSPTMNPDDVNGATTQVNNTKVALDGDENLAAAKQQANNRLDQLDHLNNAQKQQLQSQITQSSDIAAVNGHKQTAESLNTAMGNLINAIADHQAVEQRGNFINADTDKQTAYNTAVNEAAAMINKQTGQNANQTEVEQAITKVQTTLQALNGDHNLQVAKTNATQAIDALTSLNDPQKTALKDQVTAATLVTAVHQIEQNANTLNQAMHGLRQSIQDNAATKANSKYINEDQPEQQNYDQAVQAANNIINEQTATLDNNAINQAATTVNTTKAALHGDVKLQNDKDHAKQTVSQLAHLNNAQKHMEDTLIDSETTRTAVKQDLTEAQALDQLMDALQQSIADKDATRASSAYVNAEPNKKQSYDEAVQNAESIIAGLNNPTINKGNVSSATQAVISSKNALDGVERLAQDKQTAGNSLNHLDQLTPAQQQALENQINNATTRGEVAQKLTEAQALNQAMEALRNSIQDQQQTEAGSKFINEDKPQKDAYQAAVQNAKDLINQTNNPTLDKAQVEQLTQAVNQAKDNLHGDQKLADDKQHAVTDLNQLNGLNNPQRQALESQINNAATRGEVAQKLAEAKALDQAMQALRNSIQDQQQTESGSKFINEDKPQKDAYQAAVQNAKDLINQTGNPTLDKSQVEQLTQAVTTAKDNLHGDQKLARDQQQAVTTVNALPNLNHAQQQALTDAINAAPTRTEVAQHVQTATELDHAMETLKNKVDQVNTDKAQPNYTEASTDKKEAVDQALQAAESITDPTNGSNANKDAVDQVLTKLQEKENELNGNERVAEAKTQAKQTIDQLTHLNADQIATAKQNIDQATKLQPIAELVDQATQLNQSMDQLQQAVNEHANVEQTVDYTQADSDKQNAYKQAIADAENVLKQNANKQQVDQALQNILNAKQALNGDERVALAKTNGKHDIDQLNALNNAQQDGFKGRIDQSNDLNQIQQIVDEAKALNRAMDQLSQEITDNEGRTKGSTNYVNADTQVKQVYDETVDKAKQALDKSTGQNLTAKQVIKLNDAVTAAKKALNGEERLNNRKAEALQRLDQLTHLNNAQRQLAIQQINNAETLNKASRAINRATKLDNAMGAVQQYIDEQHLGVISSTNYINADDNLKANYDNAIANAAHELDKVQGNAIAKAEAEQLKQNIIDAQNALNGDQNLANAKDKANAFVNSLNGLNQQQQDLAHKAINNADTVSDVTDIVNNQIDLNDAMETLKHLVDNEIPNAEQTVNYQNADDNAKTNFDDAKRLANTLLNSDNTNVNDINGAIQAVNDAIHNLNGDQRLQDAKDKAIQSINQALANKLKEIEASNATDQDKLIAKNKAEELANSIINNINKATSNQAVSQVQTAGNHAIEQVHANEIPKAKIDANKDVDKQVQALIDEIDRNPNLTDKEKQALKDRINQILQQGHNGINNAMTKEEIEQAKAQLAQALQDIKDLVKAKEDAKQDVDKQVQALIDEIDQNPNLTDKEKQALKYRINQILQQGHNDINNALTKEEIEQAKAQLAQALQDIKDLVKAKEDAKNAIKALANAKRDQINSNPDLTPEQKAKALKEIDEAEKRALQNVENAQTIDQLNRGLNLGLDDIRNTHVWEVDEQPAVNEIFEATPEQILVNGELIVHRDDIITEQDILAHINLIDQLSAEVIDTPSTATISDSLTAKVEVTLLDGSKVIVNVPVKVVEKELSVVKQQAIESIENAAQQKINEINNSVTLTLEQKEAAIAEVNKLKQQAIDHVNNAPDVHSVEEIQQQEQAHIEQFNPEQFTIEQAKSNAIKSIEDAIQHMIDEIKARTDLTDKEKQEAIAKLNQLKEQAIQAIQRAQSIDEISEQLEQFKAQMKAANPTAKELAKRKQEAISRIKDFSNEKINSIRNSEIGTADEKQAAMNQINEIVLETIRDINNAHTLQQVEAALNNGIARISAVQIVTSDRAKQSSSTGNESNSHLTIGYGTANHPFNSSTIGHKKKLDEDDDIDPLHMRHFSNNFGNVIKNAIGVVGISGLLASFWFFIAKRRRKEDEEEELEIRDNNKDSIKETLDDTKHLPLLFAKRRRKEDEEDVTVEEKDSLNNGESLDKVKHTPFFLPKRRRKEDEEDVEVTNENTDEKVLKDNEHSPLLFAKRRKDKEEDVETTTSIESKDEDVPLLLAKKKNQKDNQSKDKKSASKNTSKKVAAKKKKKKAKKNKK</sequence>
<gene>
    <name type="primary">ebh</name>
    <name type="ordered locus">USA300HOU_1372</name>
</gene>
<protein>
    <recommendedName>
        <fullName>Extracellular matrix-binding protein ebh</fullName>
    </recommendedName>
    <alternativeName>
        <fullName>ECM-binding protein homolog</fullName>
    </alternativeName>
</protein>
<evidence type="ECO:0000255" key="1"/>
<evidence type="ECO:0000256" key="2">
    <source>
        <dbReference type="SAM" id="MobiDB-lite"/>
    </source>
</evidence>
<evidence type="ECO:0000305" key="3"/>
<reference key="1">
    <citation type="journal article" date="2007" name="BMC Microbiol.">
        <title>Subtle genetic changes enhance virulence of methicillin resistant and sensitive Staphylococcus aureus.</title>
        <authorList>
            <person name="Highlander S.K."/>
            <person name="Hulten K.G."/>
            <person name="Qin X."/>
            <person name="Jiang H."/>
            <person name="Yerrapragada S."/>
            <person name="Mason E.O. Jr."/>
            <person name="Shang Y."/>
            <person name="Williams T.M."/>
            <person name="Fortunov R.M."/>
            <person name="Liu Y."/>
            <person name="Igboeli O."/>
            <person name="Petrosino J."/>
            <person name="Tirumalai M."/>
            <person name="Uzman A."/>
            <person name="Fox G.E."/>
            <person name="Cardenas A.M."/>
            <person name="Muzny D.M."/>
            <person name="Hemphill L."/>
            <person name="Ding Y."/>
            <person name="Dugan S."/>
            <person name="Blyth P.R."/>
            <person name="Buhay C.J."/>
            <person name="Dinh H.H."/>
            <person name="Hawes A.C."/>
            <person name="Holder M."/>
            <person name="Kovar C.L."/>
            <person name="Lee S.L."/>
            <person name="Liu W."/>
            <person name="Nazareth L.V."/>
            <person name="Wang Q."/>
            <person name="Zhou J."/>
            <person name="Kaplan S.L."/>
            <person name="Weinstock G.M."/>
        </authorList>
    </citation>
    <scope>NUCLEOTIDE SEQUENCE [LARGE SCALE GENOMIC DNA]</scope>
    <source>
        <strain>USA300 / TCH1516</strain>
    </source>
</reference>
<dbReference type="EMBL" id="CP000730">
    <property type="protein sequence ID" value="ABX29382.1"/>
    <property type="molecule type" value="Genomic_DNA"/>
</dbReference>
<dbReference type="RefSeq" id="WP_001109328.1">
    <property type="nucleotide sequence ID" value="NC_010079.1"/>
</dbReference>
<dbReference type="SMR" id="A8Z414"/>
<dbReference type="KEGG" id="sax:USA300HOU_1372"/>
<dbReference type="HOGENOM" id="CLU_222673_0_0_9"/>
<dbReference type="GO" id="GO:0005886">
    <property type="term" value="C:plasma membrane"/>
    <property type="evidence" value="ECO:0007669"/>
    <property type="project" value="UniProtKB-SubCell"/>
</dbReference>
<dbReference type="Gene3D" id="3.10.20.890">
    <property type="match status" value="1"/>
</dbReference>
<dbReference type="Gene3D" id="1.20.120.1850">
    <property type="entry name" value="Ebh helix bundles repeating unit (S and A modules)"/>
    <property type="match status" value="8"/>
</dbReference>
<dbReference type="Gene3D" id="1.20.5.420">
    <property type="entry name" value="Immunoglobulin FC, subunit C"/>
    <property type="match status" value="88"/>
</dbReference>
<dbReference type="InterPro" id="IPR011439">
    <property type="entry name" value="DUF1542"/>
</dbReference>
<dbReference type="InterPro" id="IPR026361">
    <property type="entry name" value="Ebh_dom"/>
</dbReference>
<dbReference type="InterPro" id="IPR051197">
    <property type="entry name" value="ECM-binding_protein"/>
</dbReference>
<dbReference type="InterPro" id="IPR020840">
    <property type="entry name" value="Extracell_matrix-bd_GA"/>
</dbReference>
<dbReference type="InterPro" id="IPR002988">
    <property type="entry name" value="GA_module"/>
</dbReference>
<dbReference type="InterPro" id="IPR009063">
    <property type="entry name" value="Ig/albumin-bd_sf"/>
</dbReference>
<dbReference type="InterPro" id="IPR005877">
    <property type="entry name" value="YSIRK_signal_dom"/>
</dbReference>
<dbReference type="NCBIfam" id="TIGR04264">
    <property type="entry name" value="hyperosmo_Ebh"/>
    <property type="match status" value="1"/>
</dbReference>
<dbReference type="NCBIfam" id="TIGR01168">
    <property type="entry name" value="YSIRK_signal"/>
    <property type="match status" value="1"/>
</dbReference>
<dbReference type="PANTHER" id="PTHR33150">
    <property type="entry name" value="EXTRACELLULAR MATRIX-BINDING PROTEIN EBH"/>
    <property type="match status" value="1"/>
</dbReference>
<dbReference type="PANTHER" id="PTHR33150:SF1">
    <property type="entry name" value="EXTRACELLULAR MATRIX-BINDING PROTEIN EBH"/>
    <property type="match status" value="1"/>
</dbReference>
<dbReference type="Pfam" id="PF07564">
    <property type="entry name" value="DUF1542"/>
    <property type="match status" value="7"/>
</dbReference>
<dbReference type="Pfam" id="PF07554">
    <property type="entry name" value="FIVAR"/>
    <property type="match status" value="51"/>
</dbReference>
<dbReference type="Pfam" id="PF01468">
    <property type="entry name" value="GA"/>
    <property type="match status" value="11"/>
</dbReference>
<dbReference type="Pfam" id="PF04650">
    <property type="entry name" value="YSIRK_signal"/>
    <property type="match status" value="1"/>
</dbReference>
<dbReference type="SMART" id="SM00844">
    <property type="entry name" value="GA"/>
    <property type="match status" value="52"/>
</dbReference>
<dbReference type="SUPFAM" id="SSF46997">
    <property type="entry name" value="Bacterial immunoglobulin/albumin-binding domains"/>
    <property type="match status" value="101"/>
</dbReference>
<comment type="subcellular location">
    <subcellularLocation>
        <location evidence="3">Cell membrane</location>
        <topology evidence="3">Single-pass membrane protein</topology>
    </subcellularLocation>
</comment>
<accession>A8Z414</accession>
<feature type="signal peptide" evidence="1">
    <location>
        <begin position="1"/>
        <end position="39"/>
    </location>
</feature>
<feature type="chain" id="PRO_0000345981" description="Extracellular matrix-binding protein ebh">
    <location>
        <begin position="40"/>
        <end position="10421"/>
    </location>
</feature>
<feature type="transmembrane region" description="Helical" evidence="1">
    <location>
        <begin position="10227"/>
        <end position="10247"/>
    </location>
</feature>
<feature type="domain" description="FIVAR 1">
    <location>
        <begin position="2524"/>
        <end position="2580"/>
    </location>
</feature>
<feature type="domain" description="FIVAR 2">
    <location>
        <begin position="2610"/>
        <end position="2666"/>
    </location>
</feature>
<feature type="domain" description="FIVAR 3">
    <location>
        <begin position="2687"/>
        <end position="2750"/>
    </location>
</feature>
<feature type="domain" description="FIVAR 4">
    <location>
        <begin position="2780"/>
        <end position="2836"/>
    </location>
</feature>
<feature type="domain" description="FIVAR 5">
    <location>
        <begin position="2864"/>
        <end position="2919"/>
    </location>
</feature>
<feature type="domain" description="FIVAR 6">
    <location>
        <begin position="2947"/>
        <end position="3002"/>
    </location>
</feature>
<feature type="domain" description="FIVAR 7">
    <location>
        <begin position="3030"/>
        <end position="3085"/>
    </location>
</feature>
<feature type="domain" description="FIVAR 8">
    <location>
        <begin position="3154"/>
        <end position="3212"/>
    </location>
</feature>
<feature type="domain" description="FIVAR 9">
    <location>
        <begin position="3280"/>
        <end position="3339"/>
    </location>
</feature>
<feature type="domain" description="FIVAR 10">
    <location>
        <begin position="3407"/>
        <end position="3465"/>
    </location>
</feature>
<feature type="domain" description="FIVAR 11">
    <location>
        <begin position="3533"/>
        <end position="3591"/>
    </location>
</feature>
<feature type="domain" description="FIVAR 12">
    <location>
        <begin position="3659"/>
        <end position="3717"/>
    </location>
</feature>
<feature type="domain" description="FIVAR 13">
    <location>
        <begin position="3785"/>
        <end position="3843"/>
    </location>
</feature>
<feature type="domain" description="FIVAR 14">
    <location>
        <begin position="3911"/>
        <end position="3969"/>
    </location>
</feature>
<feature type="domain" description="FIVAR 15">
    <location>
        <begin position="4037"/>
        <end position="4095"/>
    </location>
</feature>
<feature type="domain" description="FIVAR 16">
    <location>
        <begin position="4163"/>
        <end position="4221"/>
    </location>
</feature>
<feature type="domain" description="FIVAR 17">
    <location>
        <begin position="4289"/>
        <end position="4347"/>
    </location>
</feature>
<feature type="domain" description="FIVAR 18">
    <location>
        <begin position="4415"/>
        <end position="4473"/>
    </location>
</feature>
<feature type="domain" description="FIVAR 19">
    <location>
        <begin position="4541"/>
        <end position="4599"/>
    </location>
</feature>
<feature type="domain" description="FIVAR 20">
    <location>
        <begin position="4667"/>
        <end position="4725"/>
    </location>
</feature>
<feature type="domain" description="FIVAR 21">
    <location>
        <begin position="4793"/>
        <end position="4851"/>
    </location>
</feature>
<feature type="domain" description="FIVAR 22">
    <location>
        <begin position="4919"/>
        <end position="4977"/>
    </location>
</feature>
<feature type="domain" description="FIVAR 23">
    <location>
        <begin position="5045"/>
        <end position="5103"/>
    </location>
</feature>
<feature type="domain" description="FIVAR 24">
    <location>
        <begin position="5171"/>
        <end position="5229"/>
    </location>
</feature>
<feature type="domain" description="FIVAR 25">
    <location>
        <begin position="5297"/>
        <end position="5355"/>
    </location>
</feature>
<feature type="domain" description="FIVAR 26">
    <location>
        <begin position="5423"/>
        <end position="5481"/>
    </location>
</feature>
<feature type="domain" description="FIVAR 27">
    <location>
        <begin position="5549"/>
        <end position="5607"/>
    </location>
</feature>
<feature type="domain" description="FIVAR 28">
    <location>
        <begin position="5675"/>
        <end position="5733"/>
    </location>
</feature>
<feature type="domain" description="FIVAR 29">
    <location>
        <begin position="5801"/>
        <end position="5859"/>
    </location>
</feature>
<feature type="domain" description="FIVAR 30">
    <location>
        <begin position="5927"/>
        <end position="5985"/>
    </location>
</feature>
<feature type="domain" description="FIVAR 31">
    <location>
        <begin position="6053"/>
        <end position="6111"/>
    </location>
</feature>
<feature type="domain" description="FIVAR 32">
    <location>
        <begin position="6179"/>
        <end position="6236"/>
    </location>
</feature>
<feature type="domain" description="FIVAR 33">
    <location>
        <begin position="6304"/>
        <end position="6362"/>
    </location>
</feature>
<feature type="domain" description="FIVAR 34">
    <location>
        <begin position="6430"/>
        <end position="6488"/>
    </location>
</feature>
<feature type="domain" description="FIVAR 35">
    <location>
        <begin position="6556"/>
        <end position="6614"/>
    </location>
</feature>
<feature type="domain" description="FIVAR 36">
    <location>
        <begin position="6682"/>
        <end position="6740"/>
    </location>
</feature>
<feature type="domain" description="FIVAR 37">
    <location>
        <begin position="6818"/>
        <end position="6866"/>
    </location>
</feature>
<feature type="domain" description="FIVAR 38">
    <location>
        <begin position="6934"/>
        <end position="6992"/>
    </location>
</feature>
<feature type="domain" description="FIVAR 39">
    <location>
        <begin position="7060"/>
        <end position="7118"/>
    </location>
</feature>
<feature type="domain" description="FIVAR 40">
    <location>
        <begin position="7186"/>
        <end position="7244"/>
    </location>
</feature>
<feature type="domain" description="FIVAR 41">
    <location>
        <begin position="7312"/>
        <end position="7370"/>
    </location>
</feature>
<feature type="domain" description="FIVAR 42">
    <location>
        <begin position="7438"/>
        <end position="7496"/>
    </location>
</feature>
<feature type="domain" description="FIVAR 43">
    <location>
        <begin position="7564"/>
        <end position="7622"/>
    </location>
</feature>
<feature type="domain" description="FIVAR 44">
    <location>
        <begin position="7690"/>
        <end position="7748"/>
    </location>
</feature>
<feature type="domain" description="FIVAR 45">
    <location>
        <begin position="7816"/>
        <end position="7874"/>
    </location>
</feature>
<feature type="domain" description="FIVAR 46">
    <location>
        <begin position="7942"/>
        <end position="8000"/>
    </location>
</feature>
<feature type="domain" description="FIVAR 47">
    <location>
        <begin position="8068"/>
        <end position="8129"/>
    </location>
</feature>
<feature type="domain" description="FIVAR 48">
    <location>
        <begin position="8194"/>
        <end position="8252"/>
    </location>
</feature>
<feature type="domain" description="FIVAR 49">
    <location>
        <begin position="8320"/>
        <end position="8378"/>
    </location>
</feature>
<feature type="domain" description="FIVAR 50">
    <location>
        <begin position="8446"/>
        <end position="8503"/>
    </location>
</feature>
<feature type="domain" description="FIVAR 51">
    <location>
        <begin position="8571"/>
        <end position="8629"/>
    </location>
</feature>
<feature type="domain" description="FIVAR 52">
    <location>
        <begin position="8697"/>
        <end position="8755"/>
    </location>
</feature>
<feature type="domain" description="FIVAR 53">
    <location>
        <begin position="8823"/>
        <end position="8881"/>
    </location>
</feature>
<feature type="domain" description="FIVAR 54">
    <location>
        <begin position="8949"/>
        <end position="9007"/>
    </location>
</feature>
<feature type="domain" description="FIVAR 55">
    <location>
        <begin position="9075"/>
        <end position="9129"/>
    </location>
</feature>
<feature type="domain" description="FIVAR 56">
    <location>
        <begin position="9197"/>
        <end position="9256"/>
    </location>
</feature>
<feature type="domain" description="FIVAR 57">
    <location>
        <begin position="9451"/>
        <end position="9507"/>
    </location>
</feature>
<feature type="region of interest" description="Disordered" evidence="2">
    <location>
        <begin position="41"/>
        <end position="86"/>
    </location>
</feature>
<feature type="region of interest" description="Disordered" evidence="2">
    <location>
        <begin position="99"/>
        <end position="152"/>
    </location>
</feature>
<feature type="region of interest" description="Disordered" evidence="2">
    <location>
        <begin position="250"/>
        <end position="277"/>
    </location>
</feature>
<feature type="region of interest" description="Disordered" evidence="2">
    <location>
        <begin position="1342"/>
        <end position="1373"/>
    </location>
</feature>
<feature type="region of interest" description="Disordered" evidence="2">
    <location>
        <begin position="2418"/>
        <end position="2438"/>
    </location>
</feature>
<feature type="region of interest" description="Disordered" evidence="2">
    <location>
        <begin position="10167"/>
        <end position="10186"/>
    </location>
</feature>
<feature type="region of interest" description="Disordered" evidence="2">
    <location>
        <begin position="10324"/>
        <end position="10421"/>
    </location>
</feature>
<feature type="compositionally biased region" description="Polar residues" evidence="2">
    <location>
        <begin position="41"/>
        <end position="59"/>
    </location>
</feature>
<feature type="compositionally biased region" description="Low complexity" evidence="2">
    <location>
        <begin position="65"/>
        <end position="80"/>
    </location>
</feature>
<feature type="compositionally biased region" description="Polar residues" evidence="2">
    <location>
        <begin position="99"/>
        <end position="117"/>
    </location>
</feature>
<feature type="compositionally biased region" description="Basic and acidic residues" evidence="2">
    <location>
        <begin position="130"/>
        <end position="140"/>
    </location>
</feature>
<feature type="compositionally biased region" description="Polar residues" evidence="2">
    <location>
        <begin position="141"/>
        <end position="151"/>
    </location>
</feature>
<feature type="compositionally biased region" description="Polar residues" evidence="2">
    <location>
        <begin position="250"/>
        <end position="266"/>
    </location>
</feature>
<feature type="compositionally biased region" description="Polar residues" evidence="2">
    <location>
        <begin position="1360"/>
        <end position="1373"/>
    </location>
</feature>
<feature type="compositionally biased region" description="Polar residues" evidence="2">
    <location>
        <begin position="2427"/>
        <end position="2438"/>
    </location>
</feature>
<feature type="compositionally biased region" description="Polar residues" evidence="2">
    <location>
        <begin position="10171"/>
        <end position="10183"/>
    </location>
</feature>
<feature type="compositionally biased region" description="Basic and acidic residues" evidence="2">
    <location>
        <begin position="10339"/>
        <end position="10349"/>
    </location>
</feature>
<feature type="compositionally biased region" description="Basic and acidic residues" evidence="2">
    <location>
        <begin position="10388"/>
        <end position="10398"/>
    </location>
</feature>
<feature type="compositionally biased region" description="Basic residues" evidence="2">
    <location>
        <begin position="10403"/>
        <end position="10421"/>
    </location>
</feature>
<proteinExistence type="inferred from homology"/>
<name>EBH_STAAT</name>
<organism>
    <name type="scientific">Staphylococcus aureus (strain USA300 / TCH1516)</name>
    <dbReference type="NCBI Taxonomy" id="451516"/>
    <lineage>
        <taxon>Bacteria</taxon>
        <taxon>Bacillati</taxon>
        <taxon>Bacillota</taxon>
        <taxon>Bacilli</taxon>
        <taxon>Bacillales</taxon>
        <taxon>Staphylococcaceae</taxon>
        <taxon>Staphylococcus</taxon>
    </lineage>
</organism>
<keyword id="KW-1003">Cell membrane</keyword>
<keyword id="KW-0472">Membrane</keyword>
<keyword id="KW-0677">Repeat</keyword>
<keyword id="KW-0732">Signal</keyword>
<keyword id="KW-0812">Transmembrane</keyword>
<keyword id="KW-1133">Transmembrane helix</keyword>